<proteinExistence type="inferred from homology"/>
<evidence type="ECO:0000255" key="1">
    <source>
        <dbReference type="HAMAP-Rule" id="MF_00362"/>
    </source>
</evidence>
<evidence type="ECO:0000305" key="2"/>
<reference key="1">
    <citation type="journal article" date="2003" name="Proc. Natl. Acad. Sci. U.S.A.">
        <title>The complete genome sequence of Chromobacterium violaceum reveals remarkable and exploitable bacterial adaptability.</title>
        <authorList>
            <person name="Vasconcelos A.T.R."/>
            <person name="de Almeida D.F."/>
            <person name="Hungria M."/>
            <person name="Guimaraes C.T."/>
            <person name="Antonio R.V."/>
            <person name="Almeida F.C."/>
            <person name="de Almeida L.G.P."/>
            <person name="de Almeida R."/>
            <person name="Alves-Gomes J.A."/>
            <person name="Andrade E.M."/>
            <person name="Araripe J."/>
            <person name="de Araujo M.F.F."/>
            <person name="Astolfi-Filho S."/>
            <person name="Azevedo V."/>
            <person name="Baptista A.J."/>
            <person name="Bataus L.A.M."/>
            <person name="Batista J.S."/>
            <person name="Belo A."/>
            <person name="van den Berg C."/>
            <person name="Bogo M."/>
            <person name="Bonatto S."/>
            <person name="Bordignon J."/>
            <person name="Brigido M.M."/>
            <person name="Brito C.A."/>
            <person name="Brocchi M."/>
            <person name="Burity H.A."/>
            <person name="Camargo A.A."/>
            <person name="Cardoso D.D.P."/>
            <person name="Carneiro N.P."/>
            <person name="Carraro D.M."/>
            <person name="Carvalho C.M.B."/>
            <person name="Cascardo J.C.M."/>
            <person name="Cavada B.S."/>
            <person name="Chueire L.M.O."/>
            <person name="Creczynski-Pasa T.B."/>
            <person name="Cunha-Junior N.C."/>
            <person name="Fagundes N."/>
            <person name="Falcao C.L."/>
            <person name="Fantinatti F."/>
            <person name="Farias I.P."/>
            <person name="Felipe M.S.S."/>
            <person name="Ferrari L.P."/>
            <person name="Ferro J.A."/>
            <person name="Ferro M.I.T."/>
            <person name="Franco G.R."/>
            <person name="Freitas N.S.A."/>
            <person name="Furlan L.R."/>
            <person name="Gazzinelli R.T."/>
            <person name="Gomes E.A."/>
            <person name="Goncalves P.R."/>
            <person name="Grangeiro T.B."/>
            <person name="Grattapaglia D."/>
            <person name="Grisard E.C."/>
            <person name="Hanna E.S."/>
            <person name="Jardim S.N."/>
            <person name="Laurino J."/>
            <person name="Leoi L.C.T."/>
            <person name="Lima L.F.A."/>
            <person name="Loureiro M.F."/>
            <person name="Lyra M.C.C.P."/>
            <person name="Madeira H.M.F."/>
            <person name="Manfio G.P."/>
            <person name="Maranhao A.Q."/>
            <person name="Martins W.S."/>
            <person name="di Mauro S.M.Z."/>
            <person name="de Medeiros S.R.B."/>
            <person name="Meissner R.V."/>
            <person name="Moreira M.A.M."/>
            <person name="Nascimento F.F."/>
            <person name="Nicolas M.F."/>
            <person name="Oliveira J.G."/>
            <person name="Oliveira S.C."/>
            <person name="Paixao R.F.C."/>
            <person name="Parente J.A."/>
            <person name="Pedrosa F.O."/>
            <person name="Pena S.D.J."/>
            <person name="Pereira J.O."/>
            <person name="Pereira M."/>
            <person name="Pinto L.S.R.C."/>
            <person name="Pinto L.S."/>
            <person name="Porto J.I.R."/>
            <person name="Potrich D.P."/>
            <person name="Ramalho-Neto C.E."/>
            <person name="Reis A.M.M."/>
            <person name="Rigo L.U."/>
            <person name="Rondinelli E."/>
            <person name="Santos E.B.P."/>
            <person name="Santos F.R."/>
            <person name="Schneider M.P.C."/>
            <person name="Seuanez H.N."/>
            <person name="Silva A.M.R."/>
            <person name="da Silva A.L.C."/>
            <person name="Silva D.W."/>
            <person name="Silva R."/>
            <person name="Simoes I.C."/>
            <person name="Simon D."/>
            <person name="Soares C.M.A."/>
            <person name="Soares R.B.A."/>
            <person name="Souza E.M."/>
            <person name="Souza K.R.L."/>
            <person name="Souza R.C."/>
            <person name="Steffens M.B.R."/>
            <person name="Steindel M."/>
            <person name="Teixeira S.R."/>
            <person name="Urmenyi T."/>
            <person name="Vettore A."/>
            <person name="Wassem R."/>
            <person name="Zaha A."/>
            <person name="Simpson A.J.G."/>
        </authorList>
    </citation>
    <scope>NUCLEOTIDE SEQUENCE [LARGE SCALE GENOMIC DNA]</scope>
    <source>
        <strain>ATCC 12472 / DSM 30191 / JCM 1249 / CCUG 213 / NBRC 12614 / NCIMB 9131 / NCTC 9757 / MK</strain>
    </source>
</reference>
<name>RL10_CHRVO</name>
<sequence length="164" mass="17393">MSLNIEDKKAVVAEVSAQLAEAQTLVIAEYRGIEVSSMTKLRAQARENGVYLRVLKNTLVRRAVEGTPFAGLADQMVGPLVYAVSADPVAAAKVLHQFAKADDKIIVKAGSYDGQVLNAAQVAELASIPSREELLSKLLYVMQAPVAGFARALAALAEKQAEAA</sequence>
<organism>
    <name type="scientific">Chromobacterium violaceum (strain ATCC 12472 / DSM 30191 / JCM 1249 / CCUG 213 / NBRC 12614 / NCIMB 9131 / NCTC 9757 / MK)</name>
    <dbReference type="NCBI Taxonomy" id="243365"/>
    <lineage>
        <taxon>Bacteria</taxon>
        <taxon>Pseudomonadati</taxon>
        <taxon>Pseudomonadota</taxon>
        <taxon>Betaproteobacteria</taxon>
        <taxon>Neisseriales</taxon>
        <taxon>Chromobacteriaceae</taxon>
        <taxon>Chromobacterium</taxon>
    </lineage>
</organism>
<protein>
    <recommendedName>
        <fullName evidence="1">Large ribosomal subunit protein uL10</fullName>
    </recommendedName>
    <alternativeName>
        <fullName evidence="2">50S ribosomal protein L10</fullName>
    </alternativeName>
</protein>
<keyword id="KW-1185">Reference proteome</keyword>
<keyword id="KW-0687">Ribonucleoprotein</keyword>
<keyword id="KW-0689">Ribosomal protein</keyword>
<keyword id="KW-0694">RNA-binding</keyword>
<keyword id="KW-0699">rRNA-binding</keyword>
<accession>Q7NQE4</accession>
<dbReference type="EMBL" id="AE016825">
    <property type="protein sequence ID" value="AAQ61855.1"/>
    <property type="molecule type" value="Genomic_DNA"/>
</dbReference>
<dbReference type="RefSeq" id="WP_011137742.1">
    <property type="nucleotide sequence ID" value="NC_005085.1"/>
</dbReference>
<dbReference type="SMR" id="Q7NQE4"/>
<dbReference type="STRING" id="243365.CV_4195"/>
<dbReference type="GeneID" id="66366333"/>
<dbReference type="KEGG" id="cvi:CV_4195"/>
<dbReference type="eggNOG" id="COG0244">
    <property type="taxonomic scope" value="Bacteria"/>
</dbReference>
<dbReference type="HOGENOM" id="CLU_092227_0_1_4"/>
<dbReference type="OrthoDB" id="9808307at2"/>
<dbReference type="Proteomes" id="UP000001424">
    <property type="component" value="Chromosome"/>
</dbReference>
<dbReference type="GO" id="GO:1990904">
    <property type="term" value="C:ribonucleoprotein complex"/>
    <property type="evidence" value="ECO:0007669"/>
    <property type="project" value="UniProtKB-KW"/>
</dbReference>
<dbReference type="GO" id="GO:0005840">
    <property type="term" value="C:ribosome"/>
    <property type="evidence" value="ECO:0007669"/>
    <property type="project" value="UniProtKB-KW"/>
</dbReference>
<dbReference type="GO" id="GO:0070180">
    <property type="term" value="F:large ribosomal subunit rRNA binding"/>
    <property type="evidence" value="ECO:0007669"/>
    <property type="project" value="UniProtKB-UniRule"/>
</dbReference>
<dbReference type="GO" id="GO:0006412">
    <property type="term" value="P:translation"/>
    <property type="evidence" value="ECO:0007669"/>
    <property type="project" value="UniProtKB-UniRule"/>
</dbReference>
<dbReference type="CDD" id="cd05797">
    <property type="entry name" value="Ribosomal_L10"/>
    <property type="match status" value="1"/>
</dbReference>
<dbReference type="Gene3D" id="3.30.70.1730">
    <property type="match status" value="1"/>
</dbReference>
<dbReference type="Gene3D" id="6.10.250.290">
    <property type="match status" value="1"/>
</dbReference>
<dbReference type="HAMAP" id="MF_00362">
    <property type="entry name" value="Ribosomal_uL10"/>
    <property type="match status" value="1"/>
</dbReference>
<dbReference type="InterPro" id="IPR001790">
    <property type="entry name" value="Ribosomal_uL10"/>
</dbReference>
<dbReference type="InterPro" id="IPR043141">
    <property type="entry name" value="Ribosomal_uL10-like_sf"/>
</dbReference>
<dbReference type="InterPro" id="IPR022973">
    <property type="entry name" value="Ribosomal_uL10_bac"/>
</dbReference>
<dbReference type="InterPro" id="IPR047865">
    <property type="entry name" value="Ribosomal_uL10_bac_type"/>
</dbReference>
<dbReference type="NCBIfam" id="NF000955">
    <property type="entry name" value="PRK00099.1-1"/>
    <property type="match status" value="1"/>
</dbReference>
<dbReference type="PANTHER" id="PTHR11560">
    <property type="entry name" value="39S RIBOSOMAL PROTEIN L10, MITOCHONDRIAL"/>
    <property type="match status" value="1"/>
</dbReference>
<dbReference type="Pfam" id="PF00466">
    <property type="entry name" value="Ribosomal_L10"/>
    <property type="match status" value="1"/>
</dbReference>
<dbReference type="SUPFAM" id="SSF160369">
    <property type="entry name" value="Ribosomal protein L10-like"/>
    <property type="match status" value="1"/>
</dbReference>
<feature type="chain" id="PRO_0000154615" description="Large ribosomal subunit protein uL10">
    <location>
        <begin position="1"/>
        <end position="164"/>
    </location>
</feature>
<gene>
    <name evidence="1" type="primary">rplJ</name>
    <name type="ordered locus">CV_4195</name>
</gene>
<comment type="function">
    <text evidence="1">Forms part of the ribosomal stalk, playing a central role in the interaction of the ribosome with GTP-bound translation factors.</text>
</comment>
<comment type="subunit">
    <text evidence="1">Part of the ribosomal stalk of the 50S ribosomal subunit. The N-terminus interacts with L11 and the large rRNA to form the base of the stalk. The C-terminus forms an elongated spine to which L12 dimers bind in a sequential fashion forming a multimeric L10(L12)X complex.</text>
</comment>
<comment type="similarity">
    <text evidence="1">Belongs to the universal ribosomal protein uL10 family.</text>
</comment>